<dbReference type="EC" id="3.1.21.2" evidence="1"/>
<dbReference type="EMBL" id="CP000051">
    <property type="protein sequence ID" value="AAX50902.1"/>
    <property type="molecule type" value="Genomic_DNA"/>
</dbReference>
<dbReference type="RefSeq" id="WP_009871993.1">
    <property type="nucleotide sequence ID" value="NC_007429.1"/>
</dbReference>
<dbReference type="SMR" id="Q3KL70"/>
<dbReference type="KEGG" id="cta:CTA_0678"/>
<dbReference type="HOGENOM" id="CLU_025885_0_1_0"/>
<dbReference type="Proteomes" id="UP000002532">
    <property type="component" value="Chromosome"/>
</dbReference>
<dbReference type="GO" id="GO:0008833">
    <property type="term" value="F:deoxyribonuclease IV (phage-T4-induced) activity"/>
    <property type="evidence" value="ECO:0007669"/>
    <property type="project" value="UniProtKB-UniRule"/>
</dbReference>
<dbReference type="GO" id="GO:0003677">
    <property type="term" value="F:DNA binding"/>
    <property type="evidence" value="ECO:0007669"/>
    <property type="project" value="InterPro"/>
</dbReference>
<dbReference type="GO" id="GO:0003906">
    <property type="term" value="F:DNA-(apurinic or apyrimidinic site) endonuclease activity"/>
    <property type="evidence" value="ECO:0007669"/>
    <property type="project" value="TreeGrafter"/>
</dbReference>
<dbReference type="GO" id="GO:0008081">
    <property type="term" value="F:phosphoric diester hydrolase activity"/>
    <property type="evidence" value="ECO:0007669"/>
    <property type="project" value="TreeGrafter"/>
</dbReference>
<dbReference type="GO" id="GO:0008270">
    <property type="term" value="F:zinc ion binding"/>
    <property type="evidence" value="ECO:0007669"/>
    <property type="project" value="UniProtKB-UniRule"/>
</dbReference>
<dbReference type="GO" id="GO:0006284">
    <property type="term" value="P:base-excision repair"/>
    <property type="evidence" value="ECO:0007669"/>
    <property type="project" value="TreeGrafter"/>
</dbReference>
<dbReference type="CDD" id="cd00019">
    <property type="entry name" value="AP2Ec"/>
    <property type="match status" value="1"/>
</dbReference>
<dbReference type="FunFam" id="3.20.20.150:FF:000001">
    <property type="entry name" value="Probable endonuclease 4"/>
    <property type="match status" value="1"/>
</dbReference>
<dbReference type="Gene3D" id="3.20.20.150">
    <property type="entry name" value="Divalent-metal-dependent TIM barrel enzymes"/>
    <property type="match status" value="1"/>
</dbReference>
<dbReference type="HAMAP" id="MF_00152">
    <property type="entry name" value="Nfo"/>
    <property type="match status" value="1"/>
</dbReference>
<dbReference type="InterPro" id="IPR001719">
    <property type="entry name" value="AP_endonuc_2"/>
</dbReference>
<dbReference type="InterPro" id="IPR018246">
    <property type="entry name" value="AP_endonuc_F2_Zn_BS"/>
</dbReference>
<dbReference type="InterPro" id="IPR036237">
    <property type="entry name" value="Xyl_isomerase-like_sf"/>
</dbReference>
<dbReference type="InterPro" id="IPR013022">
    <property type="entry name" value="Xyl_isomerase-like_TIM-brl"/>
</dbReference>
<dbReference type="NCBIfam" id="TIGR00587">
    <property type="entry name" value="nfo"/>
    <property type="match status" value="1"/>
</dbReference>
<dbReference type="NCBIfam" id="NF002197">
    <property type="entry name" value="PRK01060.1-2"/>
    <property type="match status" value="1"/>
</dbReference>
<dbReference type="PANTHER" id="PTHR21445:SF0">
    <property type="entry name" value="APURINIC-APYRIMIDINIC ENDONUCLEASE"/>
    <property type="match status" value="1"/>
</dbReference>
<dbReference type="PANTHER" id="PTHR21445">
    <property type="entry name" value="ENDONUCLEASE IV ENDODEOXYRIBONUCLEASE IV"/>
    <property type="match status" value="1"/>
</dbReference>
<dbReference type="Pfam" id="PF01261">
    <property type="entry name" value="AP_endonuc_2"/>
    <property type="match status" value="1"/>
</dbReference>
<dbReference type="SMART" id="SM00518">
    <property type="entry name" value="AP2Ec"/>
    <property type="match status" value="1"/>
</dbReference>
<dbReference type="SUPFAM" id="SSF51658">
    <property type="entry name" value="Xylose isomerase-like"/>
    <property type="match status" value="1"/>
</dbReference>
<dbReference type="PROSITE" id="PS00729">
    <property type="entry name" value="AP_NUCLEASE_F2_1"/>
    <property type="match status" value="1"/>
</dbReference>
<dbReference type="PROSITE" id="PS00730">
    <property type="entry name" value="AP_NUCLEASE_F2_2"/>
    <property type="match status" value="1"/>
</dbReference>
<dbReference type="PROSITE" id="PS00731">
    <property type="entry name" value="AP_NUCLEASE_F2_3"/>
    <property type="match status" value="1"/>
</dbReference>
<dbReference type="PROSITE" id="PS51432">
    <property type="entry name" value="AP_NUCLEASE_F2_4"/>
    <property type="match status" value="1"/>
</dbReference>
<keyword id="KW-0227">DNA damage</keyword>
<keyword id="KW-0234">DNA repair</keyword>
<keyword id="KW-0255">Endonuclease</keyword>
<keyword id="KW-0378">Hydrolase</keyword>
<keyword id="KW-0479">Metal-binding</keyword>
<keyword id="KW-0540">Nuclease</keyword>
<keyword id="KW-0862">Zinc</keyword>
<evidence type="ECO:0000255" key="1">
    <source>
        <dbReference type="HAMAP-Rule" id="MF_00152"/>
    </source>
</evidence>
<name>END4_CHLTA</name>
<feature type="chain" id="PRO_1000011299" description="Probable endonuclease 4">
    <location>
        <begin position="1"/>
        <end position="288"/>
    </location>
</feature>
<feature type="binding site" evidence="1">
    <location>
        <position position="75"/>
    </location>
    <ligand>
        <name>Zn(2+)</name>
        <dbReference type="ChEBI" id="CHEBI:29105"/>
        <label>1</label>
    </ligand>
</feature>
<feature type="binding site" evidence="1">
    <location>
        <position position="115"/>
    </location>
    <ligand>
        <name>Zn(2+)</name>
        <dbReference type="ChEBI" id="CHEBI:29105"/>
        <label>1</label>
    </ligand>
</feature>
<feature type="binding site" evidence="1">
    <location>
        <position position="153"/>
    </location>
    <ligand>
        <name>Zn(2+)</name>
        <dbReference type="ChEBI" id="CHEBI:29105"/>
        <label>1</label>
    </ligand>
</feature>
<feature type="binding site" evidence="1">
    <location>
        <position position="153"/>
    </location>
    <ligand>
        <name>Zn(2+)</name>
        <dbReference type="ChEBI" id="CHEBI:29105"/>
        <label>2</label>
    </ligand>
</feature>
<feature type="binding site" evidence="1">
    <location>
        <position position="187"/>
    </location>
    <ligand>
        <name>Zn(2+)</name>
        <dbReference type="ChEBI" id="CHEBI:29105"/>
        <label>2</label>
    </ligand>
</feature>
<feature type="binding site" evidence="1">
    <location>
        <position position="190"/>
    </location>
    <ligand>
        <name>Zn(2+)</name>
        <dbReference type="ChEBI" id="CHEBI:29105"/>
        <label>3</label>
    </ligand>
</feature>
<feature type="binding site" evidence="1">
    <location>
        <position position="224"/>
    </location>
    <ligand>
        <name>Zn(2+)</name>
        <dbReference type="ChEBI" id="CHEBI:29105"/>
        <label>2</label>
    </ligand>
</feature>
<feature type="binding site" evidence="1">
    <location>
        <position position="237"/>
    </location>
    <ligand>
        <name>Zn(2+)</name>
        <dbReference type="ChEBI" id="CHEBI:29105"/>
        <label>3</label>
    </ligand>
</feature>
<feature type="binding site" evidence="1">
    <location>
        <position position="239"/>
    </location>
    <ligand>
        <name>Zn(2+)</name>
        <dbReference type="ChEBI" id="CHEBI:29105"/>
        <label>3</label>
    </ligand>
</feature>
<feature type="binding site" evidence="1">
    <location>
        <position position="269"/>
    </location>
    <ligand>
        <name>Zn(2+)</name>
        <dbReference type="ChEBI" id="CHEBI:29105"/>
        <label>2</label>
    </ligand>
</feature>
<comment type="function">
    <text evidence="1">Endonuclease IV plays a role in DNA repair. It cleaves phosphodiester bonds at apurinic or apyrimidinic (AP) sites, generating a 3'-hydroxyl group and a 5'-terminal sugar phosphate.</text>
</comment>
<comment type="catalytic activity">
    <reaction evidence="1">
        <text>Endonucleolytic cleavage to 5'-phosphooligonucleotide end-products.</text>
        <dbReference type="EC" id="3.1.21.2"/>
    </reaction>
</comment>
<comment type="cofactor">
    <cofactor evidence="1">
        <name>Zn(2+)</name>
        <dbReference type="ChEBI" id="CHEBI:29105"/>
    </cofactor>
    <text evidence="1">Binds 3 Zn(2+) ions.</text>
</comment>
<comment type="similarity">
    <text evidence="1">Belongs to the AP endonuclease 2 family.</text>
</comment>
<reference key="1">
    <citation type="journal article" date="2005" name="Infect. Immun.">
        <title>Comparative genomic analysis of Chlamydia trachomatis oculotropic and genitotropic strains.</title>
        <authorList>
            <person name="Carlson J.H."/>
            <person name="Porcella S.F."/>
            <person name="McClarty G."/>
            <person name="Caldwell H.D."/>
        </authorList>
    </citation>
    <scope>NUCLEOTIDE SEQUENCE [LARGE SCALE GENOMIC DNA]</scope>
    <source>
        <strain>ATCC VR-571B / DSM 19440 / HAR-13</strain>
    </source>
</reference>
<gene>
    <name evidence="1" type="primary">nfo</name>
    <name type="ordered locus">CTA_0678</name>
</gene>
<organism>
    <name type="scientific">Chlamydia trachomatis serovar A (strain ATCC VR-571B / DSM 19440 / HAR-13)</name>
    <dbReference type="NCBI Taxonomy" id="315277"/>
    <lineage>
        <taxon>Bacteria</taxon>
        <taxon>Pseudomonadati</taxon>
        <taxon>Chlamydiota</taxon>
        <taxon>Chlamydiia</taxon>
        <taxon>Chlamydiales</taxon>
        <taxon>Chlamydiaceae</taxon>
        <taxon>Chlamydia/Chlamydophila group</taxon>
        <taxon>Chlamydia</taxon>
    </lineage>
</organism>
<proteinExistence type="inferred from homology"/>
<accession>Q3KL70</accession>
<protein>
    <recommendedName>
        <fullName evidence="1">Probable endonuclease 4</fullName>
        <ecNumber evidence="1">3.1.21.2</ecNumber>
    </recommendedName>
    <alternativeName>
        <fullName evidence="1">Endodeoxyribonuclease IV</fullName>
    </alternativeName>
    <alternativeName>
        <fullName evidence="1">Endonuclease IV</fullName>
    </alternativeName>
</protein>
<sequence>MFILPPPQEALLGAHTSAAGGLHNALYEGRDIGATTVQLFTANQRQWKRRTLTQEMVDQFRIALNETSLSYIMSHAGYLNNPGAPNPEILEKTRVCMHQEIADCISLGISFVNFHPGAALSDSKESCLDRTIASFSQMAPLFENNPPLVVLLETTAGQGSLIGSSFEELAYLIQGIKAHIPIGVCLDTCHIFAAGYDISSVAGWEQVLKHFDAVIGLSFLRAIHLNDSVFALGKNKDRHAPIGEGCIGSDSFCFLMQDERTRMLPKYLETPGGPDLWTKEIRYLQKVC</sequence>